<name>RL27_STAA1</name>
<evidence type="ECO:0000250" key="1">
    <source>
        <dbReference type="UniProtKB" id="Q2FXT0"/>
    </source>
</evidence>
<evidence type="ECO:0000255" key="2">
    <source>
        <dbReference type="HAMAP-Rule" id="MF_00539"/>
    </source>
</evidence>
<evidence type="ECO:0000305" key="3"/>
<reference key="1">
    <citation type="journal article" date="2008" name="Antimicrob. Agents Chemother.">
        <title>Mutated response regulator graR is responsible for phenotypic conversion of Staphylococcus aureus from heterogeneous vancomycin-intermediate resistance to vancomycin-intermediate resistance.</title>
        <authorList>
            <person name="Neoh H.-M."/>
            <person name="Cui L."/>
            <person name="Yuzawa H."/>
            <person name="Takeuchi F."/>
            <person name="Matsuo M."/>
            <person name="Hiramatsu K."/>
        </authorList>
    </citation>
    <scope>NUCLEOTIDE SEQUENCE [LARGE SCALE GENOMIC DNA]</scope>
    <source>
        <strain>Mu3 / ATCC 700698</strain>
    </source>
</reference>
<organism>
    <name type="scientific">Staphylococcus aureus (strain Mu3 / ATCC 700698)</name>
    <dbReference type="NCBI Taxonomy" id="418127"/>
    <lineage>
        <taxon>Bacteria</taxon>
        <taxon>Bacillati</taxon>
        <taxon>Bacillota</taxon>
        <taxon>Bacilli</taxon>
        <taxon>Bacillales</taxon>
        <taxon>Staphylococcaceae</taxon>
        <taxon>Staphylococcus</taxon>
    </lineage>
</organism>
<feature type="propeptide" id="PRO_0000459933" evidence="1">
    <location>
        <begin position="1"/>
        <end position="9"/>
    </location>
</feature>
<feature type="chain" id="PRO_1000017617" description="Large ribosomal subunit protein bL27">
    <location>
        <begin position="10"/>
        <end position="94"/>
    </location>
</feature>
<sequence>MLKLNLQFFASKKGVSSTKNGRDSESKRLGAKRADGQFVTGGSILYRQRGTKIYPGENVGRGGDDTLFAKIDGVVKFERKGRDKKQVSVYAVAE</sequence>
<comment type="PTM">
    <text evidence="1">The N-terminus is cleaved by ribosomal processing cysteine protease Prp.</text>
</comment>
<comment type="similarity">
    <text evidence="2">Belongs to the bacterial ribosomal protein bL27 family.</text>
</comment>
<keyword id="KW-0687">Ribonucleoprotein</keyword>
<keyword id="KW-0689">Ribosomal protein</keyword>
<gene>
    <name evidence="2" type="primary">rpmA</name>
    <name type="ordered locus">SAHV_1632</name>
</gene>
<accession>A7X362</accession>
<protein>
    <recommendedName>
        <fullName evidence="2">Large ribosomal subunit protein bL27</fullName>
    </recommendedName>
    <alternativeName>
        <fullName evidence="3">50S ribosomal protein L27</fullName>
    </alternativeName>
</protein>
<dbReference type="EMBL" id="AP009324">
    <property type="protein sequence ID" value="BAF78515.1"/>
    <property type="molecule type" value="Genomic_DNA"/>
</dbReference>
<dbReference type="RefSeq" id="WP_000916187.1">
    <property type="nucleotide sequence ID" value="NZ_CTYB01000003.1"/>
</dbReference>
<dbReference type="SMR" id="A7X362"/>
<dbReference type="GeneID" id="98346013"/>
<dbReference type="KEGG" id="saw:SAHV_1632"/>
<dbReference type="HOGENOM" id="CLU_095424_4_0_9"/>
<dbReference type="GO" id="GO:0022625">
    <property type="term" value="C:cytosolic large ribosomal subunit"/>
    <property type="evidence" value="ECO:0007669"/>
    <property type="project" value="TreeGrafter"/>
</dbReference>
<dbReference type="GO" id="GO:0003735">
    <property type="term" value="F:structural constituent of ribosome"/>
    <property type="evidence" value="ECO:0007669"/>
    <property type="project" value="InterPro"/>
</dbReference>
<dbReference type="GO" id="GO:0006412">
    <property type="term" value="P:translation"/>
    <property type="evidence" value="ECO:0007669"/>
    <property type="project" value="UniProtKB-UniRule"/>
</dbReference>
<dbReference type="FunFam" id="2.40.50.100:FF:000004">
    <property type="entry name" value="50S ribosomal protein L27"/>
    <property type="match status" value="1"/>
</dbReference>
<dbReference type="Gene3D" id="2.40.50.100">
    <property type="match status" value="1"/>
</dbReference>
<dbReference type="HAMAP" id="MF_00539">
    <property type="entry name" value="Ribosomal_bL27"/>
    <property type="match status" value="1"/>
</dbReference>
<dbReference type="InterPro" id="IPR001684">
    <property type="entry name" value="Ribosomal_bL27"/>
</dbReference>
<dbReference type="InterPro" id="IPR018261">
    <property type="entry name" value="Ribosomal_bL27_CS"/>
</dbReference>
<dbReference type="NCBIfam" id="TIGR00062">
    <property type="entry name" value="L27"/>
    <property type="match status" value="1"/>
</dbReference>
<dbReference type="PANTHER" id="PTHR15893:SF0">
    <property type="entry name" value="LARGE RIBOSOMAL SUBUNIT PROTEIN BL27M"/>
    <property type="match status" value="1"/>
</dbReference>
<dbReference type="PANTHER" id="PTHR15893">
    <property type="entry name" value="RIBOSOMAL PROTEIN L27"/>
    <property type="match status" value="1"/>
</dbReference>
<dbReference type="Pfam" id="PF01016">
    <property type="entry name" value="Ribosomal_L27"/>
    <property type="match status" value="1"/>
</dbReference>
<dbReference type="PRINTS" id="PR00063">
    <property type="entry name" value="RIBOSOMALL27"/>
</dbReference>
<dbReference type="SUPFAM" id="SSF110324">
    <property type="entry name" value="Ribosomal L27 protein-like"/>
    <property type="match status" value="1"/>
</dbReference>
<dbReference type="PROSITE" id="PS00831">
    <property type="entry name" value="RIBOSOMAL_L27"/>
    <property type="match status" value="1"/>
</dbReference>
<proteinExistence type="inferred from homology"/>